<organism>
    <name type="scientific">Oryza sativa subsp. japonica</name>
    <name type="common">Rice</name>
    <dbReference type="NCBI Taxonomy" id="39947"/>
    <lineage>
        <taxon>Eukaryota</taxon>
        <taxon>Viridiplantae</taxon>
        <taxon>Streptophyta</taxon>
        <taxon>Embryophyta</taxon>
        <taxon>Tracheophyta</taxon>
        <taxon>Spermatophyta</taxon>
        <taxon>Magnoliopsida</taxon>
        <taxon>Liliopsida</taxon>
        <taxon>Poales</taxon>
        <taxon>Poaceae</taxon>
        <taxon>BOP clade</taxon>
        <taxon>Oryzoideae</taxon>
        <taxon>Oryzeae</taxon>
        <taxon>Oryzinae</taxon>
        <taxon>Oryza</taxon>
        <taxon>Oryza sativa</taxon>
    </lineage>
</organism>
<gene>
    <name type="primary">CIPK31</name>
    <name type="synonym">CK1</name>
    <name type="ordered locus">Os03g0319400</name>
    <name type="ordered locus">LOC_Os03g20380</name>
</gene>
<accession>Q6X4A2</accession>
<accession>Q10M86</accession>
<accession>Q10M87</accession>
<reference key="1">
    <citation type="journal article" date="2003" name="Plant Mol. Biol.">
        <title>Isolation and characterization of a novel rice Ca2+-regulated protein kinase gene involved in responses to diverse signals including cold, light, cytokinins, sugars and salts.</title>
        <authorList>
            <person name="Kim K.-N."/>
            <person name="Lee J.-S."/>
            <person name="Han H."/>
            <person name="Choi S.A."/>
            <person name="Go S.J."/>
            <person name="Yoon I.S."/>
        </authorList>
    </citation>
    <scope>NUCLEOTIDE SEQUENCE [MRNA] (ISOFORM 1)</scope>
    <scope>TISSUE SPECIFICITY</scope>
    <scope>DOMAIN</scope>
    <scope>INDUCTION</scope>
    <scope>COFACTOR</scope>
    <scope>PHOSPHORYLATION</scope>
    <scope>INTERACTION WITH CBL3</scope>
    <source>
        <strain>cv. Ilpoom</strain>
        <tissue>Leaf</tissue>
    </source>
</reference>
<reference key="2">
    <citation type="journal article" date="2005" name="Genome Res.">
        <title>Sequence, annotation, and analysis of synteny between rice chromosome 3 and diverged grass species.</title>
        <authorList>
            <consortium name="The rice chromosome 3 sequencing consortium"/>
            <person name="Buell C.R."/>
            <person name="Yuan Q."/>
            <person name="Ouyang S."/>
            <person name="Liu J."/>
            <person name="Zhu W."/>
            <person name="Wang A."/>
            <person name="Maiti R."/>
            <person name="Haas B."/>
            <person name="Wortman J."/>
            <person name="Pertea M."/>
            <person name="Jones K.M."/>
            <person name="Kim M."/>
            <person name="Overton L."/>
            <person name="Tsitrin T."/>
            <person name="Fadrosh D."/>
            <person name="Bera J."/>
            <person name="Weaver B."/>
            <person name="Jin S."/>
            <person name="Johri S."/>
            <person name="Reardon M."/>
            <person name="Webb K."/>
            <person name="Hill J."/>
            <person name="Moffat K."/>
            <person name="Tallon L."/>
            <person name="Van Aken S."/>
            <person name="Lewis M."/>
            <person name="Utterback T."/>
            <person name="Feldblyum T."/>
            <person name="Zismann V."/>
            <person name="Iobst S."/>
            <person name="Hsiao J."/>
            <person name="de Vazeille A.R."/>
            <person name="Salzberg S.L."/>
            <person name="White O."/>
            <person name="Fraser C.M."/>
            <person name="Yu Y."/>
            <person name="Kim H."/>
            <person name="Rambo T."/>
            <person name="Currie J."/>
            <person name="Collura K."/>
            <person name="Kernodle-Thompson S."/>
            <person name="Wei F."/>
            <person name="Kudrna K."/>
            <person name="Ammiraju J.S.S."/>
            <person name="Luo M."/>
            <person name="Goicoechea J.L."/>
            <person name="Wing R.A."/>
            <person name="Henry D."/>
            <person name="Oates R."/>
            <person name="Palmer M."/>
            <person name="Pries G."/>
            <person name="Saski C."/>
            <person name="Simmons J."/>
            <person name="Soderlund C."/>
            <person name="Nelson W."/>
            <person name="de la Bastide M."/>
            <person name="Spiegel L."/>
            <person name="Nascimento L."/>
            <person name="Huang E."/>
            <person name="Preston R."/>
            <person name="Zutavern T."/>
            <person name="Palmer L."/>
            <person name="O'Shaughnessy A."/>
            <person name="Dike S."/>
            <person name="McCombie W.R."/>
            <person name="Minx P."/>
            <person name="Cordum H."/>
            <person name="Wilson R."/>
            <person name="Jin W."/>
            <person name="Lee H.R."/>
            <person name="Jiang J."/>
            <person name="Jackson S."/>
        </authorList>
    </citation>
    <scope>NUCLEOTIDE SEQUENCE [LARGE SCALE GENOMIC DNA]</scope>
    <source>
        <strain>cv. Nipponbare</strain>
    </source>
</reference>
<reference key="3">
    <citation type="journal article" date="2005" name="Nature">
        <title>The map-based sequence of the rice genome.</title>
        <authorList>
            <consortium name="International rice genome sequencing project (IRGSP)"/>
        </authorList>
    </citation>
    <scope>NUCLEOTIDE SEQUENCE [LARGE SCALE GENOMIC DNA]</scope>
    <source>
        <strain>cv. Nipponbare</strain>
    </source>
</reference>
<reference key="4">
    <citation type="journal article" date="2008" name="Nucleic Acids Res.">
        <title>The rice annotation project database (RAP-DB): 2008 update.</title>
        <authorList>
            <consortium name="The rice annotation project (RAP)"/>
        </authorList>
    </citation>
    <scope>GENOME REANNOTATION</scope>
    <source>
        <strain>cv. Nipponbare</strain>
    </source>
</reference>
<reference key="5">
    <citation type="journal article" date="2013" name="Rice">
        <title>Improvement of the Oryza sativa Nipponbare reference genome using next generation sequence and optical map data.</title>
        <authorList>
            <person name="Kawahara Y."/>
            <person name="de la Bastide M."/>
            <person name="Hamilton J.P."/>
            <person name="Kanamori H."/>
            <person name="McCombie W.R."/>
            <person name="Ouyang S."/>
            <person name="Schwartz D.C."/>
            <person name="Tanaka T."/>
            <person name="Wu J."/>
            <person name="Zhou S."/>
            <person name="Childs K.L."/>
            <person name="Davidson R.M."/>
            <person name="Lin H."/>
            <person name="Quesada-Ocampo L."/>
            <person name="Vaillancourt B."/>
            <person name="Sakai H."/>
            <person name="Lee S.S."/>
            <person name="Kim J."/>
            <person name="Numa H."/>
            <person name="Itoh T."/>
            <person name="Buell C.R."/>
            <person name="Matsumoto T."/>
        </authorList>
    </citation>
    <scope>GENOME REANNOTATION</scope>
    <source>
        <strain>cv. Nipponbare</strain>
    </source>
</reference>
<reference key="6">
    <citation type="journal article" date="2004" name="Plant Physiol.">
        <title>Calcium sensors and their interacting protein kinases: genomics of the Arabidopsis and rice CBL-CIPK signaling networks.</title>
        <authorList>
            <person name="Kolukisaoglu U."/>
            <person name="Weinl S."/>
            <person name="Blazevic D."/>
            <person name="Batistic O."/>
            <person name="Kudla J."/>
        </authorList>
    </citation>
    <scope>GENE FAMILY</scope>
    <scope>NOMENCLATURE</scope>
</reference>
<reference key="7">
    <citation type="journal article" date="2007" name="Plant Physiol.">
        <title>Characterization of stress-responsive CIPK genes in rice for stress tolerance improvement.</title>
        <authorList>
            <person name="Xiang Y."/>
            <person name="Huang Y."/>
            <person name="Xiong L."/>
        </authorList>
    </citation>
    <scope>FUNCTION</scope>
    <scope>INDUCTION</scope>
</reference>
<protein>
    <recommendedName>
        <fullName>CBL-interacting protein kinase 31</fullName>
        <ecNumber>2.7.11.1</ecNumber>
    </recommendedName>
    <alternativeName>
        <fullName>OsCIPK31</fullName>
        <shortName>OsCK1</shortName>
    </alternativeName>
</protein>
<proteinExistence type="evidence at protein level"/>
<name>CIPKV_ORYSJ</name>
<comment type="function">
    <text evidence="6">Involved in cold stress tolerance. CIPK serine-threonine protein kinases interact with CBL proteins. Binding of a CBL protein to the regulatory NAF domain of CIPK protein lead to the activation of the kinase in a calcium-dependent manner.</text>
</comment>
<comment type="catalytic activity">
    <reaction>
        <text>L-seryl-[protein] + ATP = O-phospho-L-seryl-[protein] + ADP + H(+)</text>
        <dbReference type="Rhea" id="RHEA:17989"/>
        <dbReference type="Rhea" id="RHEA-COMP:9863"/>
        <dbReference type="Rhea" id="RHEA-COMP:11604"/>
        <dbReference type="ChEBI" id="CHEBI:15378"/>
        <dbReference type="ChEBI" id="CHEBI:29999"/>
        <dbReference type="ChEBI" id="CHEBI:30616"/>
        <dbReference type="ChEBI" id="CHEBI:83421"/>
        <dbReference type="ChEBI" id="CHEBI:456216"/>
        <dbReference type="EC" id="2.7.11.1"/>
    </reaction>
</comment>
<comment type="catalytic activity">
    <reaction>
        <text>L-threonyl-[protein] + ATP = O-phospho-L-threonyl-[protein] + ADP + H(+)</text>
        <dbReference type="Rhea" id="RHEA:46608"/>
        <dbReference type="Rhea" id="RHEA-COMP:11060"/>
        <dbReference type="Rhea" id="RHEA-COMP:11605"/>
        <dbReference type="ChEBI" id="CHEBI:15378"/>
        <dbReference type="ChEBI" id="CHEBI:30013"/>
        <dbReference type="ChEBI" id="CHEBI:30616"/>
        <dbReference type="ChEBI" id="CHEBI:61977"/>
        <dbReference type="ChEBI" id="CHEBI:456216"/>
        <dbReference type="EC" id="2.7.11.1"/>
    </reaction>
</comment>
<comment type="cofactor">
    <cofactor evidence="5">
        <name>Mn(2+)</name>
        <dbReference type="ChEBI" id="CHEBI:29035"/>
    </cofactor>
</comment>
<comment type="subunit">
    <text>May interact with CBL3.</text>
</comment>
<comment type="alternative products">
    <event type="alternative splicing"/>
    <isoform>
        <id>Q6X4A2-1</id>
        <name>1</name>
        <sequence type="displayed"/>
    </isoform>
    <isoform>
        <id>Q6X4A2-2</id>
        <name>2</name>
        <sequence type="described" ref="VSP_034046"/>
    </isoform>
    <isoform>
        <id>Q6X4A2-3</id>
        <name>3</name>
        <sequence type="described" ref="VSP_034047 VSP_034048"/>
    </isoform>
</comment>
<comment type="tissue specificity">
    <text evidence="5">Highly expressed in leaf blade and leaf sheath, but not in other tissues.</text>
</comment>
<comment type="induction">
    <text evidence="5 6">By salt, cold, calcium, sucrose and cytokinins in young seedlings, and by light in the shoot of etiolated seedlings. Induction by cold inhibited by the calcium ionophore A23187. Induction by calcium inhibited by the Ca(2+)-channel blocker La(3+), and by A23187.</text>
</comment>
<comment type="domain">
    <text evidence="1 5">The activation loop within the kinase domain is the target of phosphorylation/activation by upstream protein kinases (By similarity). The N-terminal region containing the kinase domain is responsible for the autophosphorylation.</text>
</comment>
<comment type="PTM">
    <text evidence="5">Autophosphorylated.</text>
</comment>
<comment type="similarity">
    <text evidence="7">Belongs to the protein kinase superfamily. CAMK Ser/Thr protein kinase family. SNF1 subfamily.</text>
</comment>
<keyword id="KW-0025">Alternative splicing</keyword>
<keyword id="KW-0067">ATP-binding</keyword>
<keyword id="KW-0106">Calcium</keyword>
<keyword id="KW-0418">Kinase</keyword>
<keyword id="KW-0464">Manganese</keyword>
<keyword id="KW-0547">Nucleotide-binding</keyword>
<keyword id="KW-0597">Phosphoprotein</keyword>
<keyword id="KW-1185">Reference proteome</keyword>
<keyword id="KW-0723">Serine/threonine-protein kinase</keyword>
<keyword id="KW-0808">Transferase</keyword>
<dbReference type="EC" id="2.7.11.1"/>
<dbReference type="EMBL" id="AY256847">
    <property type="protein sequence ID" value="AAP82174.1"/>
    <property type="molecule type" value="mRNA"/>
</dbReference>
<dbReference type="EMBL" id="DP000009">
    <property type="protein sequence ID" value="ABF95647.1"/>
    <property type="molecule type" value="Genomic_DNA"/>
</dbReference>
<dbReference type="EMBL" id="DP000009">
    <property type="protein sequence ID" value="ABF95650.1"/>
    <property type="molecule type" value="Genomic_DNA"/>
</dbReference>
<dbReference type="EMBL" id="AP008209">
    <property type="protein sequence ID" value="BAF11863.1"/>
    <property type="molecule type" value="Genomic_DNA"/>
</dbReference>
<dbReference type="EMBL" id="AP014959">
    <property type="protein sequence ID" value="BAS83925.1"/>
    <property type="molecule type" value="Genomic_DNA"/>
</dbReference>
<dbReference type="RefSeq" id="XP_015631096.1">
    <property type="nucleotide sequence ID" value="XM_015775610.1"/>
</dbReference>
<dbReference type="SMR" id="Q6X4A2"/>
<dbReference type="FunCoup" id="Q6X4A2">
    <property type="interactions" value="459"/>
</dbReference>
<dbReference type="STRING" id="39947.Q6X4A2"/>
<dbReference type="PaxDb" id="39947-Q6X4A2"/>
<dbReference type="EnsemblPlants" id="Os03t0319400-01">
    <molecule id="Q6X4A2-1"/>
    <property type="protein sequence ID" value="Os03t0319400-01"/>
    <property type="gene ID" value="Os03g0319400"/>
</dbReference>
<dbReference type="Gramene" id="Os03t0319400-01">
    <molecule id="Q6X4A2-1"/>
    <property type="protein sequence ID" value="Os03t0319400-01"/>
    <property type="gene ID" value="Os03g0319400"/>
</dbReference>
<dbReference type="KEGG" id="dosa:Os03g0319400"/>
<dbReference type="eggNOG" id="KOG0583">
    <property type="taxonomic scope" value="Eukaryota"/>
</dbReference>
<dbReference type="InParanoid" id="Q6X4A2"/>
<dbReference type="OMA" id="DICHLYL"/>
<dbReference type="OrthoDB" id="193931at2759"/>
<dbReference type="Proteomes" id="UP000000763">
    <property type="component" value="Chromosome 3"/>
</dbReference>
<dbReference type="Proteomes" id="UP000059680">
    <property type="component" value="Chromosome 3"/>
</dbReference>
<dbReference type="ExpressionAtlas" id="Q6X4A2">
    <property type="expression patterns" value="baseline and differential"/>
</dbReference>
<dbReference type="GO" id="GO:0005524">
    <property type="term" value="F:ATP binding"/>
    <property type="evidence" value="ECO:0007669"/>
    <property type="project" value="UniProtKB-KW"/>
</dbReference>
<dbReference type="GO" id="GO:0106310">
    <property type="term" value="F:protein serine kinase activity"/>
    <property type="evidence" value="ECO:0007669"/>
    <property type="project" value="RHEA"/>
</dbReference>
<dbReference type="GO" id="GO:0004674">
    <property type="term" value="F:protein serine/threonine kinase activity"/>
    <property type="evidence" value="ECO:0000318"/>
    <property type="project" value="GO_Central"/>
</dbReference>
<dbReference type="GO" id="GO:0007165">
    <property type="term" value="P:signal transduction"/>
    <property type="evidence" value="ECO:0007669"/>
    <property type="project" value="InterPro"/>
</dbReference>
<dbReference type="CDD" id="cd12195">
    <property type="entry name" value="CIPK_C"/>
    <property type="match status" value="1"/>
</dbReference>
<dbReference type="CDD" id="cd14663">
    <property type="entry name" value="STKc_SnRK3"/>
    <property type="match status" value="1"/>
</dbReference>
<dbReference type="FunFam" id="1.10.510.10:FF:000279">
    <property type="entry name" value="Non-specific serine/threonine protein kinase"/>
    <property type="match status" value="1"/>
</dbReference>
<dbReference type="FunFam" id="3.30.200.20:FF:000096">
    <property type="entry name" value="Non-specific serine/threonine protein kinase"/>
    <property type="match status" value="1"/>
</dbReference>
<dbReference type="FunFam" id="3.30.310.80:FF:000002">
    <property type="entry name" value="Non-specific serine/threonine protein kinase"/>
    <property type="match status" value="1"/>
</dbReference>
<dbReference type="Gene3D" id="3.30.310.80">
    <property type="entry name" value="Kinase associated domain 1, KA1"/>
    <property type="match status" value="1"/>
</dbReference>
<dbReference type="Gene3D" id="3.30.200.20">
    <property type="entry name" value="Phosphorylase Kinase, domain 1"/>
    <property type="match status" value="1"/>
</dbReference>
<dbReference type="Gene3D" id="1.10.510.10">
    <property type="entry name" value="Transferase(Phosphotransferase) domain 1"/>
    <property type="match status" value="1"/>
</dbReference>
<dbReference type="InterPro" id="IPR028375">
    <property type="entry name" value="KA1/Ssp2_C"/>
</dbReference>
<dbReference type="InterPro" id="IPR011009">
    <property type="entry name" value="Kinase-like_dom_sf"/>
</dbReference>
<dbReference type="InterPro" id="IPR018451">
    <property type="entry name" value="NAF/FISL_domain"/>
</dbReference>
<dbReference type="InterPro" id="IPR004041">
    <property type="entry name" value="NAF_dom"/>
</dbReference>
<dbReference type="InterPro" id="IPR000719">
    <property type="entry name" value="Prot_kinase_dom"/>
</dbReference>
<dbReference type="InterPro" id="IPR017441">
    <property type="entry name" value="Protein_kinase_ATP_BS"/>
</dbReference>
<dbReference type="InterPro" id="IPR008271">
    <property type="entry name" value="Ser/Thr_kinase_AS"/>
</dbReference>
<dbReference type="PANTHER" id="PTHR43895">
    <property type="entry name" value="CALCIUM/CALMODULIN-DEPENDENT PROTEIN KINASE KINASE-RELATED"/>
    <property type="match status" value="1"/>
</dbReference>
<dbReference type="PANTHER" id="PTHR43895:SF168">
    <property type="entry name" value="NON-SPECIFIC SERINE_THREONINE PROTEIN KINASE"/>
    <property type="match status" value="1"/>
</dbReference>
<dbReference type="Pfam" id="PF03822">
    <property type="entry name" value="NAF"/>
    <property type="match status" value="1"/>
</dbReference>
<dbReference type="Pfam" id="PF00069">
    <property type="entry name" value="Pkinase"/>
    <property type="match status" value="1"/>
</dbReference>
<dbReference type="SMART" id="SM00220">
    <property type="entry name" value="S_TKc"/>
    <property type="match status" value="1"/>
</dbReference>
<dbReference type="SUPFAM" id="SSF103243">
    <property type="entry name" value="KA1-like"/>
    <property type="match status" value="1"/>
</dbReference>
<dbReference type="SUPFAM" id="SSF56112">
    <property type="entry name" value="Protein kinase-like (PK-like)"/>
    <property type="match status" value="1"/>
</dbReference>
<dbReference type="PROSITE" id="PS50816">
    <property type="entry name" value="NAF"/>
    <property type="match status" value="1"/>
</dbReference>
<dbReference type="PROSITE" id="PS00107">
    <property type="entry name" value="PROTEIN_KINASE_ATP"/>
    <property type="match status" value="1"/>
</dbReference>
<dbReference type="PROSITE" id="PS50011">
    <property type="entry name" value="PROTEIN_KINASE_DOM"/>
    <property type="match status" value="1"/>
</dbReference>
<dbReference type="PROSITE" id="PS00108">
    <property type="entry name" value="PROTEIN_KINASE_ST"/>
    <property type="match status" value="1"/>
</dbReference>
<sequence length="449" mass="50954">MYRAKRAALSPKVKRRVGKYELGRTIGEGTFAKVRFAKNTENDEPVAIKILDKEKVQKHRLVEQIRREICTMKLVKHPNVVRLFEVMGSKARIFIVLEYVTGGELFEIIATNGRLKEEEARKYFQQLINAVDYCHSRGVYHRDLKLENLLLDASGNLKVSDFGLSALTEQVKADGLLHTTCGTPNYVAPEVIEDRGYDGAAADIWSCGVILYVLLAGFLPFEDDNIIALYKKISEAQFTCPSWFSTGAKKLITRILDPNPTTRITISQILEDPWFKKGYKPPVFDEKYETSFDDVDAAFGDSEDRHVKEETEDQPTSMNAFELISLNQALNLDNLFEAKKEYKRETRFTSQCPPKEIITKIEEAAKPLGFDIQKKNYKMRMENLKAGRKGNLNVATEVFQVAPSLHVVELKKAKGDTLEFQKFYRTLSTQLKDVVWKCDGEVEGNGAAA</sequence>
<evidence type="ECO:0000250" key="1"/>
<evidence type="ECO:0000255" key="2">
    <source>
        <dbReference type="PROSITE-ProRule" id="PRU00159"/>
    </source>
</evidence>
<evidence type="ECO:0000255" key="3">
    <source>
        <dbReference type="PROSITE-ProRule" id="PRU00256"/>
    </source>
</evidence>
<evidence type="ECO:0000255" key="4">
    <source>
        <dbReference type="PROSITE-ProRule" id="PRU10027"/>
    </source>
</evidence>
<evidence type="ECO:0000269" key="5">
    <source>
    </source>
</evidence>
<evidence type="ECO:0000269" key="6">
    <source>
    </source>
</evidence>
<evidence type="ECO:0000305" key="7"/>
<feature type="chain" id="PRO_0000085862" description="CBL-interacting protein kinase 31">
    <location>
        <begin position="1"/>
        <end position="449"/>
    </location>
</feature>
<feature type="domain" description="Protein kinase" evidence="2">
    <location>
        <begin position="20"/>
        <end position="275"/>
    </location>
</feature>
<feature type="domain" description="NAF" evidence="3">
    <location>
        <begin position="313"/>
        <end position="337"/>
    </location>
</feature>
<feature type="region of interest" description="Activation loop" evidence="1">
    <location>
        <begin position="161"/>
        <end position="190"/>
    </location>
</feature>
<feature type="active site" description="Proton acceptor" evidence="2 4">
    <location>
        <position position="143"/>
    </location>
</feature>
<feature type="binding site" evidence="2">
    <location>
        <begin position="26"/>
        <end position="34"/>
    </location>
    <ligand>
        <name>ATP</name>
        <dbReference type="ChEBI" id="CHEBI:30616"/>
    </ligand>
</feature>
<feature type="binding site" evidence="2">
    <location>
        <position position="49"/>
    </location>
    <ligand>
        <name>ATP</name>
        <dbReference type="ChEBI" id="CHEBI:30616"/>
    </ligand>
</feature>
<feature type="splice variant" id="VSP_034046" description="In isoform 2." evidence="7">
    <location>
        <begin position="173"/>
        <end position="190"/>
    </location>
</feature>
<feature type="splice variant" id="VSP_034047" description="In isoform 3." evidence="7">
    <original>MRM</original>
    <variation>VFI</variation>
    <location>
        <begin position="379"/>
        <end position="381"/>
    </location>
</feature>
<feature type="splice variant" id="VSP_034048" description="In isoform 3." evidence="7">
    <location>
        <begin position="382"/>
        <end position="449"/>
    </location>
</feature>